<organism evidence="3">
    <name type="scientific">Cavia porcellus</name>
    <name type="common">Guinea pig</name>
    <dbReference type="NCBI Taxonomy" id="10141"/>
    <lineage>
        <taxon>Eukaryota</taxon>
        <taxon>Metazoa</taxon>
        <taxon>Chordata</taxon>
        <taxon>Craniata</taxon>
        <taxon>Vertebrata</taxon>
        <taxon>Euteleostomi</taxon>
        <taxon>Mammalia</taxon>
        <taxon>Eutheria</taxon>
        <taxon>Euarchontoglires</taxon>
        <taxon>Glires</taxon>
        <taxon>Rodentia</taxon>
        <taxon>Hystricomorpha</taxon>
        <taxon>Caviidae</taxon>
        <taxon>Cavia</taxon>
    </lineage>
</organism>
<name>MUP_CAVPO</name>
<dbReference type="Allergome" id="195">
    <property type="allergen name" value="Cav p 1"/>
</dbReference>
<dbReference type="Allergome" id="3184">
    <property type="allergen name" value="Cav p 1.0101"/>
</dbReference>
<dbReference type="InParanoid" id="P83507"/>
<dbReference type="Proteomes" id="UP000005447">
    <property type="component" value="Unassembled WGS sequence"/>
</dbReference>
<dbReference type="GO" id="GO:0005576">
    <property type="term" value="C:extracellular region"/>
    <property type="evidence" value="ECO:0007669"/>
    <property type="project" value="UniProtKB-SubCell"/>
</dbReference>
<dbReference type="GO" id="GO:0019863">
    <property type="term" value="F:IgE binding"/>
    <property type="evidence" value="ECO:0000314"/>
    <property type="project" value="UniProtKB"/>
</dbReference>
<dbReference type="GO" id="GO:0005550">
    <property type="term" value="F:pheromone binding"/>
    <property type="evidence" value="ECO:0007669"/>
    <property type="project" value="UniProtKB-KW"/>
</dbReference>
<reference evidence="3" key="1">
    <citation type="journal article" date="2002" name="Allergy">
        <title>Purification and partial characterization of the major allergen, Cav p 1, from guinea pig Cavia porcellus.</title>
        <authorList>
            <person name="Fahlbusch B."/>
            <person name="Rudeschko O."/>
            <person name="Szilagyi U."/>
            <person name="Schlott B."/>
            <person name="Henzgen M."/>
            <person name="Schlenvoigt G."/>
            <person name="Schubert H."/>
        </authorList>
    </citation>
    <scope>PROTEIN SEQUENCE</scope>
    <scope>ALLERGEN</scope>
    <source>
        <strain>Dunkin-Hartley</strain>
        <tissue>Hair</tissue>
    </source>
</reference>
<proteinExistence type="evidence at protein level"/>
<feature type="chain" id="PRO_0000201022" description="Major urinary protein">
    <location>
        <begin position="1"/>
        <end position="15" status="greater than"/>
    </location>
</feature>
<feature type="non-terminal residue" evidence="3">
    <location>
        <position position="15"/>
    </location>
</feature>
<protein>
    <recommendedName>
        <fullName>Major urinary protein</fullName>
        <shortName>MUP</shortName>
    </recommendedName>
    <allergenName>Cav p 1</allergenName>
</protein>
<sequence>SEINGDWNTIALSAD</sequence>
<comment type="function">
    <text evidence="1">Binds pheromones that are released from drying urine of males. These pheromones affect the sexual behavior of females (By similarity).</text>
</comment>
<comment type="subcellular location">
    <subcellularLocation>
        <location evidence="3">Secreted</location>
    </subcellularLocation>
</comment>
<comment type="allergen">
    <text evidence="2">Causes an allergic reaction in human. Binds to IgE. Is a cause of guinea pig hair allergy.</text>
</comment>
<comment type="similarity">
    <text evidence="3">Belongs to the calycin superfamily. Lipocalin family.</text>
</comment>
<keyword id="KW-0020">Allergen</keyword>
<keyword id="KW-0903">Direct protein sequencing</keyword>
<keyword id="KW-0590">Pheromone-binding</keyword>
<keyword id="KW-1185">Reference proteome</keyword>
<keyword id="KW-0964">Secreted</keyword>
<keyword id="KW-0813">Transport</keyword>
<evidence type="ECO:0000250" key="1"/>
<evidence type="ECO:0000269" key="2">
    <source>
    </source>
</evidence>
<evidence type="ECO:0000305" key="3"/>
<accession>P83507</accession>